<evidence type="ECO:0000255" key="1">
    <source>
        <dbReference type="HAMAP-Rule" id="MF_00160"/>
    </source>
</evidence>
<organism>
    <name type="scientific">Sodalis glossinidius (strain morsitans)</name>
    <dbReference type="NCBI Taxonomy" id="343509"/>
    <lineage>
        <taxon>Bacteria</taxon>
        <taxon>Pseudomonadati</taxon>
        <taxon>Pseudomonadota</taxon>
        <taxon>Gammaproteobacteria</taxon>
        <taxon>Enterobacterales</taxon>
        <taxon>Bruguierivoracaceae</taxon>
        <taxon>Sodalis</taxon>
    </lineage>
</organism>
<proteinExistence type="inferred from homology"/>
<sequence length="361" mass="39898">MNQVFNFSSGPAMLPAEVLRKAEQELCNWHGLGTSVMEISHRSKEFLEVAQSSEQDLRELLAVPDNYKVLFCQGGARAQFAAVPMNLLGEATRADYIDGGYWAHSAIKEAQKYCDPQVINVTTEIDSMRAIKPMRDWELSSGGAYLHYCPNETIDGLAIDELPDFGDRVVVADFSSTILSHPLDVSRFGVIYAGAQKNIGPAGLTLVIVREDLLGRASKALPSILDYSVLAENDSMFNTPPTFAWYLSGLVFKWLKAQGGLAEMDKRNQAKASLLYRTIDESYFYRNTVASANRSRMNVPFQLADSKLDALFLQESFAAGLHALKGHRVVGGMRASLYNAVPLEGVQALVDFMLDFARRHG</sequence>
<name>SERC_SODGM</name>
<keyword id="KW-0028">Amino-acid biosynthesis</keyword>
<keyword id="KW-0032">Aminotransferase</keyword>
<keyword id="KW-0963">Cytoplasm</keyword>
<keyword id="KW-0663">Pyridoxal phosphate</keyword>
<keyword id="KW-0664">Pyridoxine biosynthesis</keyword>
<keyword id="KW-0718">Serine biosynthesis</keyword>
<keyword id="KW-0808">Transferase</keyword>
<reference key="1">
    <citation type="journal article" date="2006" name="Genome Res.">
        <title>Massive genome erosion and functional adaptations provide insights into the symbiotic lifestyle of Sodalis glossinidius in the tsetse host.</title>
        <authorList>
            <person name="Toh H."/>
            <person name="Weiss B.L."/>
            <person name="Perkin S.A.H."/>
            <person name="Yamashita A."/>
            <person name="Oshima K."/>
            <person name="Hattori M."/>
            <person name="Aksoy S."/>
        </authorList>
    </citation>
    <scope>NUCLEOTIDE SEQUENCE [LARGE SCALE GENOMIC DNA]</scope>
    <source>
        <strain>morsitans</strain>
    </source>
</reference>
<protein>
    <recommendedName>
        <fullName evidence="1">Phosphoserine aminotransferase</fullName>
        <ecNumber evidence="1">2.6.1.52</ecNumber>
    </recommendedName>
    <alternativeName>
        <fullName evidence="1">Phosphohydroxythreonine aminotransferase</fullName>
        <shortName evidence="1">PSAT</shortName>
    </alternativeName>
</protein>
<accession>Q2NUB0</accession>
<dbReference type="EC" id="2.6.1.52" evidence="1"/>
<dbReference type="EMBL" id="AP008232">
    <property type="protein sequence ID" value="BAE74265.1"/>
    <property type="molecule type" value="Genomic_DNA"/>
</dbReference>
<dbReference type="RefSeq" id="WP_011410851.1">
    <property type="nucleotide sequence ID" value="NC_007712.1"/>
</dbReference>
<dbReference type="SMR" id="Q2NUB0"/>
<dbReference type="STRING" id="343509.SG0990"/>
<dbReference type="KEGG" id="sgl:SG0990"/>
<dbReference type="eggNOG" id="COG1932">
    <property type="taxonomic scope" value="Bacteria"/>
</dbReference>
<dbReference type="HOGENOM" id="CLU_034866_0_2_6"/>
<dbReference type="OrthoDB" id="9809412at2"/>
<dbReference type="BioCyc" id="SGLO343509:SGP1_RS08470-MONOMER"/>
<dbReference type="UniPathway" id="UPA00135">
    <property type="reaction ID" value="UER00197"/>
</dbReference>
<dbReference type="UniPathway" id="UPA00244">
    <property type="reaction ID" value="UER00311"/>
</dbReference>
<dbReference type="Proteomes" id="UP000001932">
    <property type="component" value="Chromosome"/>
</dbReference>
<dbReference type="GO" id="GO:0005737">
    <property type="term" value="C:cytoplasm"/>
    <property type="evidence" value="ECO:0007669"/>
    <property type="project" value="UniProtKB-SubCell"/>
</dbReference>
<dbReference type="GO" id="GO:0004648">
    <property type="term" value="F:O-phospho-L-serine:2-oxoglutarate aminotransferase activity"/>
    <property type="evidence" value="ECO:0007669"/>
    <property type="project" value="UniProtKB-UniRule"/>
</dbReference>
<dbReference type="GO" id="GO:0030170">
    <property type="term" value="F:pyridoxal phosphate binding"/>
    <property type="evidence" value="ECO:0007669"/>
    <property type="project" value="UniProtKB-UniRule"/>
</dbReference>
<dbReference type="GO" id="GO:0006564">
    <property type="term" value="P:L-serine biosynthetic process"/>
    <property type="evidence" value="ECO:0007669"/>
    <property type="project" value="UniProtKB-UniRule"/>
</dbReference>
<dbReference type="GO" id="GO:0008615">
    <property type="term" value="P:pyridoxine biosynthetic process"/>
    <property type="evidence" value="ECO:0007669"/>
    <property type="project" value="UniProtKB-UniRule"/>
</dbReference>
<dbReference type="CDD" id="cd00611">
    <property type="entry name" value="PSAT_like"/>
    <property type="match status" value="1"/>
</dbReference>
<dbReference type="FunFam" id="3.40.640.10:FF:000010">
    <property type="entry name" value="Phosphoserine aminotransferase"/>
    <property type="match status" value="1"/>
</dbReference>
<dbReference type="FunFam" id="3.90.1150.10:FF:000006">
    <property type="entry name" value="Phosphoserine aminotransferase"/>
    <property type="match status" value="1"/>
</dbReference>
<dbReference type="Gene3D" id="3.90.1150.10">
    <property type="entry name" value="Aspartate Aminotransferase, domain 1"/>
    <property type="match status" value="1"/>
</dbReference>
<dbReference type="Gene3D" id="3.40.640.10">
    <property type="entry name" value="Type I PLP-dependent aspartate aminotransferase-like (Major domain)"/>
    <property type="match status" value="1"/>
</dbReference>
<dbReference type="HAMAP" id="MF_00160">
    <property type="entry name" value="SerC_aminotrans_5"/>
    <property type="match status" value="1"/>
</dbReference>
<dbReference type="InterPro" id="IPR000192">
    <property type="entry name" value="Aminotrans_V_dom"/>
</dbReference>
<dbReference type="InterPro" id="IPR020578">
    <property type="entry name" value="Aminotrans_V_PyrdxlP_BS"/>
</dbReference>
<dbReference type="InterPro" id="IPR022278">
    <property type="entry name" value="Pser_aminoTfrase"/>
</dbReference>
<dbReference type="InterPro" id="IPR015424">
    <property type="entry name" value="PyrdxlP-dep_Trfase"/>
</dbReference>
<dbReference type="InterPro" id="IPR015421">
    <property type="entry name" value="PyrdxlP-dep_Trfase_major"/>
</dbReference>
<dbReference type="InterPro" id="IPR015422">
    <property type="entry name" value="PyrdxlP-dep_Trfase_small"/>
</dbReference>
<dbReference type="NCBIfam" id="NF003764">
    <property type="entry name" value="PRK05355.1"/>
    <property type="match status" value="1"/>
</dbReference>
<dbReference type="NCBIfam" id="TIGR01364">
    <property type="entry name" value="serC_1"/>
    <property type="match status" value="1"/>
</dbReference>
<dbReference type="PANTHER" id="PTHR43247">
    <property type="entry name" value="PHOSPHOSERINE AMINOTRANSFERASE"/>
    <property type="match status" value="1"/>
</dbReference>
<dbReference type="PANTHER" id="PTHR43247:SF1">
    <property type="entry name" value="PHOSPHOSERINE AMINOTRANSFERASE"/>
    <property type="match status" value="1"/>
</dbReference>
<dbReference type="Pfam" id="PF00266">
    <property type="entry name" value="Aminotran_5"/>
    <property type="match status" value="1"/>
</dbReference>
<dbReference type="PIRSF" id="PIRSF000525">
    <property type="entry name" value="SerC"/>
    <property type="match status" value="1"/>
</dbReference>
<dbReference type="SUPFAM" id="SSF53383">
    <property type="entry name" value="PLP-dependent transferases"/>
    <property type="match status" value="1"/>
</dbReference>
<dbReference type="PROSITE" id="PS00595">
    <property type="entry name" value="AA_TRANSFER_CLASS_5"/>
    <property type="match status" value="1"/>
</dbReference>
<gene>
    <name evidence="1" type="primary">serC</name>
    <name type="ordered locus">SG0990</name>
</gene>
<comment type="function">
    <text evidence="1">Catalyzes the reversible conversion of 3-phosphohydroxypyruvate to phosphoserine and of 3-hydroxy-2-oxo-4-phosphonooxybutanoate to phosphohydroxythreonine.</text>
</comment>
<comment type="catalytic activity">
    <reaction evidence="1">
        <text>O-phospho-L-serine + 2-oxoglutarate = 3-phosphooxypyruvate + L-glutamate</text>
        <dbReference type="Rhea" id="RHEA:14329"/>
        <dbReference type="ChEBI" id="CHEBI:16810"/>
        <dbReference type="ChEBI" id="CHEBI:18110"/>
        <dbReference type="ChEBI" id="CHEBI:29985"/>
        <dbReference type="ChEBI" id="CHEBI:57524"/>
        <dbReference type="EC" id="2.6.1.52"/>
    </reaction>
</comment>
<comment type="catalytic activity">
    <reaction evidence="1">
        <text>4-(phosphooxy)-L-threonine + 2-oxoglutarate = (R)-3-hydroxy-2-oxo-4-phosphooxybutanoate + L-glutamate</text>
        <dbReference type="Rhea" id="RHEA:16573"/>
        <dbReference type="ChEBI" id="CHEBI:16810"/>
        <dbReference type="ChEBI" id="CHEBI:29985"/>
        <dbReference type="ChEBI" id="CHEBI:58452"/>
        <dbReference type="ChEBI" id="CHEBI:58538"/>
        <dbReference type="EC" id="2.6.1.52"/>
    </reaction>
</comment>
<comment type="cofactor">
    <cofactor evidence="1">
        <name>pyridoxal 5'-phosphate</name>
        <dbReference type="ChEBI" id="CHEBI:597326"/>
    </cofactor>
    <text evidence="1">Binds 1 pyridoxal phosphate per subunit.</text>
</comment>
<comment type="pathway">
    <text evidence="1">Amino-acid biosynthesis; L-serine biosynthesis; L-serine from 3-phospho-D-glycerate: step 2/3.</text>
</comment>
<comment type="pathway">
    <text evidence="1">Cofactor biosynthesis; pyridoxine 5'-phosphate biosynthesis; pyridoxine 5'-phosphate from D-erythrose 4-phosphate: step 3/5.</text>
</comment>
<comment type="subunit">
    <text evidence="1">Homodimer.</text>
</comment>
<comment type="subcellular location">
    <subcellularLocation>
        <location evidence="1">Cytoplasm</location>
    </subcellularLocation>
</comment>
<comment type="similarity">
    <text evidence="1">Belongs to the class-V pyridoxal-phosphate-dependent aminotransferase family. SerC subfamily.</text>
</comment>
<feature type="chain" id="PRO_1000203582" description="Phosphoserine aminotransferase">
    <location>
        <begin position="1"/>
        <end position="361"/>
    </location>
</feature>
<feature type="binding site" evidence="1">
    <location>
        <position position="9"/>
    </location>
    <ligand>
        <name>L-glutamate</name>
        <dbReference type="ChEBI" id="CHEBI:29985"/>
    </ligand>
</feature>
<feature type="binding site" evidence="1">
    <location>
        <position position="42"/>
    </location>
    <ligand>
        <name>L-glutamate</name>
        <dbReference type="ChEBI" id="CHEBI:29985"/>
    </ligand>
</feature>
<feature type="binding site" evidence="1">
    <location>
        <begin position="76"/>
        <end position="77"/>
    </location>
    <ligand>
        <name>pyridoxal 5'-phosphate</name>
        <dbReference type="ChEBI" id="CHEBI:597326"/>
    </ligand>
</feature>
<feature type="binding site" evidence="1">
    <location>
        <position position="102"/>
    </location>
    <ligand>
        <name>pyridoxal 5'-phosphate</name>
        <dbReference type="ChEBI" id="CHEBI:597326"/>
    </ligand>
</feature>
<feature type="binding site" evidence="1">
    <location>
        <position position="153"/>
    </location>
    <ligand>
        <name>pyridoxal 5'-phosphate</name>
        <dbReference type="ChEBI" id="CHEBI:597326"/>
    </ligand>
</feature>
<feature type="binding site" evidence="1">
    <location>
        <position position="173"/>
    </location>
    <ligand>
        <name>pyridoxal 5'-phosphate</name>
        <dbReference type="ChEBI" id="CHEBI:597326"/>
    </ligand>
</feature>
<feature type="binding site" evidence="1">
    <location>
        <position position="196"/>
    </location>
    <ligand>
        <name>pyridoxal 5'-phosphate</name>
        <dbReference type="ChEBI" id="CHEBI:597326"/>
    </ligand>
</feature>
<feature type="binding site" evidence="1">
    <location>
        <begin position="238"/>
        <end position="239"/>
    </location>
    <ligand>
        <name>pyridoxal 5'-phosphate</name>
        <dbReference type="ChEBI" id="CHEBI:597326"/>
    </ligand>
</feature>
<feature type="modified residue" description="N6-(pyridoxal phosphate)lysine" evidence="1">
    <location>
        <position position="197"/>
    </location>
</feature>